<proteinExistence type="evidence at protein level"/>
<evidence type="ECO:0000256" key="1">
    <source>
        <dbReference type="SAM" id="MobiDB-lite"/>
    </source>
</evidence>
<evidence type="ECO:0000269" key="2">
    <source>
    </source>
</evidence>
<evidence type="ECO:0000269" key="3">
    <source>
    </source>
</evidence>
<evidence type="ECO:0000303" key="4">
    <source>
    </source>
</evidence>
<evidence type="ECO:0000305" key="5"/>
<evidence type="ECO:0000305" key="6">
    <source>
    </source>
</evidence>
<evidence type="ECO:0000312" key="7">
    <source>
        <dbReference type="EMBL" id="AAL28463.1"/>
    </source>
</evidence>
<evidence type="ECO:0000312" key="8">
    <source>
        <dbReference type="EMBL" id="AAM29407.1"/>
    </source>
</evidence>
<evidence type="ECO:0000312" key="9">
    <source>
        <dbReference type="EMBL" id="CAL26410.1"/>
    </source>
</evidence>
<evidence type="ECO:0000312" key="10">
    <source>
        <dbReference type="EMBL" id="CAL26411.1"/>
    </source>
</evidence>
<evidence type="ECO:0000312" key="11">
    <source>
        <dbReference type="EMBL" id="CAL26412.1"/>
    </source>
</evidence>
<evidence type="ECO:0000312" key="12">
    <source>
        <dbReference type="EMBL" id="CAL26413.1"/>
    </source>
</evidence>
<evidence type="ECO:0000312" key="13">
    <source>
        <dbReference type="EMBL" id="CAL26414.1"/>
    </source>
</evidence>
<evidence type="ECO:0000312" key="14">
    <source>
        <dbReference type="EMBL" id="CAL26415.1"/>
    </source>
</evidence>
<evidence type="ECO:0000312" key="15">
    <source>
        <dbReference type="EMBL" id="CAL26416.1"/>
    </source>
</evidence>
<evidence type="ECO:0000312" key="16">
    <source>
        <dbReference type="EMBL" id="CAL26417.1"/>
    </source>
</evidence>
<evidence type="ECO:0000312" key="17">
    <source>
        <dbReference type="EMBL" id="CAL26418.1"/>
    </source>
</evidence>
<evidence type="ECO:0000312" key="18">
    <source>
        <dbReference type="EMBL" id="CAL26419.1"/>
    </source>
</evidence>
<evidence type="ECO:0000312" key="19">
    <source>
        <dbReference type="EMBL" id="CAL26420.1"/>
    </source>
</evidence>
<evidence type="ECO:0000312" key="20">
    <source>
        <dbReference type="EMBL" id="CAL26421.1"/>
    </source>
</evidence>
<evidence type="ECO:0000312" key="21">
    <source>
        <dbReference type="EMBL" id="CAR93464.1"/>
    </source>
</evidence>
<evidence type="ECO:0000312" key="22">
    <source>
        <dbReference type="EMBL" id="CAR93465.1"/>
    </source>
</evidence>
<evidence type="ECO:0000312" key="23">
    <source>
        <dbReference type="EMBL" id="CAR93466.1"/>
    </source>
</evidence>
<evidence type="ECO:0000312" key="24">
    <source>
        <dbReference type="EMBL" id="CAR93467.1"/>
    </source>
</evidence>
<evidence type="ECO:0000312" key="25">
    <source>
        <dbReference type="EMBL" id="CAR93468.1"/>
    </source>
</evidence>
<evidence type="ECO:0000312" key="26">
    <source>
        <dbReference type="EMBL" id="CAR93469.1"/>
    </source>
</evidence>
<evidence type="ECO:0000312" key="27">
    <source>
        <dbReference type="EMBL" id="CAR93470.1"/>
    </source>
</evidence>
<evidence type="ECO:0000312" key="28">
    <source>
        <dbReference type="EMBL" id="CAR93471.1"/>
    </source>
</evidence>
<evidence type="ECO:0000312" key="29">
    <source>
        <dbReference type="EMBL" id="CAR93472.1"/>
    </source>
</evidence>
<evidence type="ECO:0000312" key="30">
    <source>
        <dbReference type="EMBL" id="CAR93473.1"/>
    </source>
</evidence>
<evidence type="ECO:0000312" key="31">
    <source>
        <dbReference type="EMBL" id="CAR93474.1"/>
    </source>
</evidence>
<evidence type="ECO:0000312" key="32">
    <source>
        <dbReference type="EMBL" id="CAR93475.1"/>
    </source>
</evidence>
<evidence type="ECO:0000312" key="33">
    <source>
        <dbReference type="FlyBase" id="FBgn0036815"/>
    </source>
</evidence>
<evidence type="ECO:0000312" key="34">
    <source>
        <dbReference type="Proteomes" id="UP000000803"/>
    </source>
</evidence>
<comment type="function">
    <text evidence="2">Part of the HipHop-HOAP complex that recruits the MTV complex to form the terminin telomere-capping complex, which binds to chromosome ends in a sequence-independent manner and prevents telomere fusion.</text>
</comment>
<comment type="subunit">
    <text evidence="2 6">Component of the HipHop-HOAP telomere-capping complex, composed of at least HipHop and cav/HOAP, and may include Su(var)205/HP1; HipHop and cav/HOAP, but not Su(var)205, are interdependent for their protein stability (PubMed:20057353). Interacts (via N-terminus) with cav/HOAP and Su(var)205/HP1 (PubMed:20057353). The HipHop-HOAP complex recruits the MTV complex, consisting of moi/modigliani, tea and ver/verrocchio, to telomeres to form the terminin telomere-capping complex (Probable).</text>
</comment>
<comment type="interaction">
    <interactant intactId="EBI-103483">
        <id>Q7JWP6</id>
    </interactant>
    <interactant intactId="EBI-104820">
        <id>Q95RV2</id>
        <label>cav</label>
    </interactant>
    <organismsDiffer>false</organismsDiffer>
    <experiments>7</experiments>
</comment>
<comment type="subcellular location">
    <subcellularLocation>
        <location evidence="2 3">Nucleus</location>
    </subcellularLocation>
    <subcellularLocation>
        <location evidence="2 3">Chromosome</location>
    </subcellularLocation>
    <subcellularLocation>
        <location evidence="2 3">Chromosome</location>
        <location evidence="2 3">Telomere</location>
    </subcellularLocation>
    <text evidence="2 3">Colocalizes with cav/HOAP at polytene and mitotic chromosome telomeres (PubMed:20057353). Telomere localization is enhanced by the activity of tefu/ATM and the MRN complex (PubMed:20057353). Telomere localization is not dependent on the MTV complex components moi/modigliani, tea or ver/verrocchio (PubMed:27835648).</text>
</comment>
<comment type="developmental stage">
    <text evidence="2">Expressed in larval salivary glands (at protein level).</text>
</comment>
<feature type="chain" id="PRO_0000460345" description="HP1-HOAP-interacting protein">
    <location>
        <begin position="1"/>
        <end position="221"/>
    </location>
</feature>
<feature type="region of interest" description="Disordered" evidence="1">
    <location>
        <begin position="69"/>
        <end position="113"/>
    </location>
</feature>
<feature type="compositionally biased region" description="Low complexity" evidence="1">
    <location>
        <begin position="86"/>
        <end position="103"/>
    </location>
</feature>
<accession>Q7JWP6</accession>
<name>HPHP_DROME</name>
<protein>
    <recommendedName>
        <fullName evidence="4">HP1-HOAP-interacting protein</fullName>
    </recommendedName>
</protein>
<sequence>MASIDEGSRVERRFCAVGNHTLRKPYRQLNNKYLVRFACLLNSEIRAGNLICCKCYTDLVRLYRKKNDNAKRHKMARETAASITDVSGSQSSSHQSAPSLHVSGQSSEFGASYSEGGIVTPDEELCSHRSLSQDSDNVPTTSAAAIQKRQLARANLMVKPSQRLSLAQTTPDCDDYDPNSNLSLNAVNGTRLPHIQPIPKRRPTVLDKQSMDIYLMGTTGG</sequence>
<reference evidence="34" key="1">
    <citation type="journal article" date="2000" name="Science">
        <title>The genome sequence of Drosophila melanogaster.</title>
        <authorList>
            <person name="Adams M.D."/>
            <person name="Celniker S.E."/>
            <person name="Holt R.A."/>
            <person name="Evans C.A."/>
            <person name="Gocayne J.D."/>
            <person name="Amanatides P.G."/>
            <person name="Scherer S.E."/>
            <person name="Li P.W."/>
            <person name="Hoskins R.A."/>
            <person name="Galle R.F."/>
            <person name="George R.A."/>
            <person name="Lewis S.E."/>
            <person name="Richards S."/>
            <person name="Ashburner M."/>
            <person name="Henderson S.N."/>
            <person name="Sutton G.G."/>
            <person name="Wortman J.R."/>
            <person name="Yandell M.D."/>
            <person name="Zhang Q."/>
            <person name="Chen L.X."/>
            <person name="Brandon R.C."/>
            <person name="Rogers Y.-H.C."/>
            <person name="Blazej R.G."/>
            <person name="Champe M."/>
            <person name="Pfeiffer B.D."/>
            <person name="Wan K.H."/>
            <person name="Doyle C."/>
            <person name="Baxter E.G."/>
            <person name="Helt G."/>
            <person name="Nelson C.R."/>
            <person name="Miklos G.L.G."/>
            <person name="Abril J.F."/>
            <person name="Agbayani A."/>
            <person name="An H.-J."/>
            <person name="Andrews-Pfannkoch C."/>
            <person name="Baldwin D."/>
            <person name="Ballew R.M."/>
            <person name="Basu A."/>
            <person name="Baxendale J."/>
            <person name="Bayraktaroglu L."/>
            <person name="Beasley E.M."/>
            <person name="Beeson K.Y."/>
            <person name="Benos P.V."/>
            <person name="Berman B.P."/>
            <person name="Bhandari D."/>
            <person name="Bolshakov S."/>
            <person name="Borkova D."/>
            <person name="Botchan M.R."/>
            <person name="Bouck J."/>
            <person name="Brokstein P."/>
            <person name="Brottier P."/>
            <person name="Burtis K.C."/>
            <person name="Busam D.A."/>
            <person name="Butler H."/>
            <person name="Cadieu E."/>
            <person name="Center A."/>
            <person name="Chandra I."/>
            <person name="Cherry J.M."/>
            <person name="Cawley S."/>
            <person name="Dahlke C."/>
            <person name="Davenport L.B."/>
            <person name="Davies P."/>
            <person name="de Pablos B."/>
            <person name="Delcher A."/>
            <person name="Deng Z."/>
            <person name="Mays A.D."/>
            <person name="Dew I."/>
            <person name="Dietz S.M."/>
            <person name="Dodson K."/>
            <person name="Doup L.E."/>
            <person name="Downes M."/>
            <person name="Dugan-Rocha S."/>
            <person name="Dunkov B.C."/>
            <person name="Dunn P."/>
            <person name="Durbin K.J."/>
            <person name="Evangelista C.C."/>
            <person name="Ferraz C."/>
            <person name="Ferriera S."/>
            <person name="Fleischmann W."/>
            <person name="Fosler C."/>
            <person name="Gabrielian A.E."/>
            <person name="Garg N.S."/>
            <person name="Gelbart W.M."/>
            <person name="Glasser K."/>
            <person name="Glodek A."/>
            <person name="Gong F."/>
            <person name="Gorrell J.H."/>
            <person name="Gu Z."/>
            <person name="Guan P."/>
            <person name="Harris M."/>
            <person name="Harris N.L."/>
            <person name="Harvey D.A."/>
            <person name="Heiman T.J."/>
            <person name="Hernandez J.R."/>
            <person name="Houck J."/>
            <person name="Hostin D."/>
            <person name="Houston K.A."/>
            <person name="Howland T.J."/>
            <person name="Wei M.-H."/>
            <person name="Ibegwam C."/>
            <person name="Jalali M."/>
            <person name="Kalush F."/>
            <person name="Karpen G.H."/>
            <person name="Ke Z."/>
            <person name="Kennison J.A."/>
            <person name="Ketchum K.A."/>
            <person name="Kimmel B.E."/>
            <person name="Kodira C.D."/>
            <person name="Kraft C.L."/>
            <person name="Kravitz S."/>
            <person name="Kulp D."/>
            <person name="Lai Z."/>
            <person name="Lasko P."/>
            <person name="Lei Y."/>
            <person name="Levitsky A.A."/>
            <person name="Li J.H."/>
            <person name="Li Z."/>
            <person name="Liang Y."/>
            <person name="Lin X."/>
            <person name="Liu X."/>
            <person name="Mattei B."/>
            <person name="McIntosh T.C."/>
            <person name="McLeod M.P."/>
            <person name="McPherson D."/>
            <person name="Merkulov G."/>
            <person name="Milshina N.V."/>
            <person name="Mobarry C."/>
            <person name="Morris J."/>
            <person name="Moshrefi A."/>
            <person name="Mount S.M."/>
            <person name="Moy M."/>
            <person name="Murphy B."/>
            <person name="Murphy L."/>
            <person name="Muzny D.M."/>
            <person name="Nelson D.L."/>
            <person name="Nelson D.R."/>
            <person name="Nelson K.A."/>
            <person name="Nixon K."/>
            <person name="Nusskern D.R."/>
            <person name="Pacleb J.M."/>
            <person name="Palazzolo M."/>
            <person name="Pittman G.S."/>
            <person name="Pan S."/>
            <person name="Pollard J."/>
            <person name="Puri V."/>
            <person name="Reese M.G."/>
            <person name="Reinert K."/>
            <person name="Remington K."/>
            <person name="Saunders R.D.C."/>
            <person name="Scheeler F."/>
            <person name="Shen H."/>
            <person name="Shue B.C."/>
            <person name="Siden-Kiamos I."/>
            <person name="Simpson M."/>
            <person name="Skupski M.P."/>
            <person name="Smith T.J."/>
            <person name="Spier E."/>
            <person name="Spradling A.C."/>
            <person name="Stapleton M."/>
            <person name="Strong R."/>
            <person name="Sun E."/>
            <person name="Svirskas R."/>
            <person name="Tector C."/>
            <person name="Turner R."/>
            <person name="Venter E."/>
            <person name="Wang A.H."/>
            <person name="Wang X."/>
            <person name="Wang Z.-Y."/>
            <person name="Wassarman D.A."/>
            <person name="Weinstock G.M."/>
            <person name="Weissenbach J."/>
            <person name="Williams S.M."/>
            <person name="Woodage T."/>
            <person name="Worley K.C."/>
            <person name="Wu D."/>
            <person name="Yang S."/>
            <person name="Yao Q.A."/>
            <person name="Ye J."/>
            <person name="Yeh R.-F."/>
            <person name="Zaveri J.S."/>
            <person name="Zhan M."/>
            <person name="Zhang G."/>
            <person name="Zhao Q."/>
            <person name="Zheng L."/>
            <person name="Zheng X.H."/>
            <person name="Zhong F.N."/>
            <person name="Zhong W."/>
            <person name="Zhou X."/>
            <person name="Zhu S.C."/>
            <person name="Zhu X."/>
            <person name="Smith H.O."/>
            <person name="Gibbs R.A."/>
            <person name="Myers E.W."/>
            <person name="Rubin G.M."/>
            <person name="Venter J.C."/>
        </authorList>
    </citation>
    <scope>NUCLEOTIDE SEQUENCE [LARGE SCALE GENOMIC DNA]</scope>
    <source>
        <strain evidence="34">Berkeley</strain>
    </source>
</reference>
<reference evidence="34" key="2">
    <citation type="journal article" date="2002" name="Genome Biol.">
        <title>Annotation of the Drosophila melanogaster euchromatic genome: a systematic review.</title>
        <authorList>
            <person name="Misra S."/>
            <person name="Crosby M.A."/>
            <person name="Mungall C.J."/>
            <person name="Matthews B.B."/>
            <person name="Campbell K.S."/>
            <person name="Hradecky P."/>
            <person name="Huang Y."/>
            <person name="Kaminker J.S."/>
            <person name="Millburn G.H."/>
            <person name="Prochnik S.E."/>
            <person name="Smith C.D."/>
            <person name="Tupy J.L."/>
            <person name="Whitfield E.J."/>
            <person name="Bayraktaroglu L."/>
            <person name="Berman B.P."/>
            <person name="Bettencourt B.R."/>
            <person name="Celniker S.E."/>
            <person name="de Grey A.D.N.J."/>
            <person name="Drysdale R.A."/>
            <person name="Harris N.L."/>
            <person name="Richter J."/>
            <person name="Russo S."/>
            <person name="Schroeder A.J."/>
            <person name="Shu S.Q."/>
            <person name="Stapleton M."/>
            <person name="Yamada C."/>
            <person name="Ashburner M."/>
            <person name="Gelbart W.M."/>
            <person name="Rubin G.M."/>
            <person name="Lewis S.E."/>
        </authorList>
    </citation>
    <scope>GENOME REANNOTATION</scope>
    <source>
        <strain evidence="34">Berkeley</strain>
    </source>
</reference>
<reference evidence="9" key="3">
    <citation type="journal article" date="2006" name="Genetics">
        <title>Widespread adaptive evolution of Drosophila genes with sex-biased expression.</title>
        <authorList>
            <person name="Proeschel M."/>
            <person name="Zhang Z."/>
            <person name="Parsch J."/>
        </authorList>
    </citation>
    <scope>NUCLEOTIDE SEQUENCE [LARGE SCALE GENOMIC DNA]</scope>
    <source>
        <strain evidence="12">ZBMEL131</strain>
        <strain evidence="13">ZBMEL145</strain>
        <strain evidence="14">ZBMEL157</strain>
        <strain evidence="15">ZBMEL186</strain>
        <strain evidence="16">ZBMEL191</strain>
        <strain evidence="17">ZBMEL229</strain>
        <strain evidence="18">ZBMEL377</strain>
        <strain evidence="19">ZBMEL384</strain>
        <strain evidence="20">ZBMEL398</strain>
        <strain evidence="9">ZBMEL82</strain>
        <strain evidence="10">ZBMEL84</strain>
        <strain evidence="11">ZBMEL95</strain>
    </source>
</reference>
<reference evidence="21" key="4">
    <citation type="journal article" date="2009" name="Mol. Biol. Evol.">
        <title>The influence of demography and weak selection on the McDonald-Kreitman test: an empirical study in Drosophila.</title>
        <authorList>
            <person name="Parsch J."/>
            <person name="Zhang Z."/>
            <person name="Baines J.F."/>
        </authorList>
    </citation>
    <scope>NUCLEOTIDE SEQUENCE [LARGE SCALE GENOMIC DNA]</scope>
    <source>
        <strain evidence="21">MEL01</strain>
        <strain evidence="22">MEL02</strain>
        <strain evidence="23">MEL11</strain>
        <strain evidence="24">MEL12</strain>
        <strain evidence="25">MEL13</strain>
        <strain evidence="26">MEL14</strain>
        <strain evidence="27">MEL15</strain>
        <strain evidence="28">MEL16</strain>
        <strain evidence="29">MEL17</strain>
        <strain evidence="30">MEL18</strain>
        <strain evidence="31">MEL19</strain>
        <strain evidence="32">MEL20</strain>
    </source>
</reference>
<reference evidence="7 8" key="5">
    <citation type="journal article" date="2002" name="Genome Biol.">
        <title>A Drosophila full-length cDNA resource.</title>
        <authorList>
            <person name="Stapleton M."/>
            <person name="Carlson J.W."/>
            <person name="Brokstein P."/>
            <person name="Yu C."/>
            <person name="Champe M."/>
            <person name="George R.A."/>
            <person name="Guarin H."/>
            <person name="Kronmiller B."/>
            <person name="Pacleb J.M."/>
            <person name="Park S."/>
            <person name="Wan K.H."/>
            <person name="Rubin G.M."/>
            <person name="Celniker S.E."/>
        </authorList>
    </citation>
    <scope>NUCLEOTIDE SEQUENCE [LARGE SCALE MRNA]</scope>
    <source>
        <strain evidence="7 8">Berkeley</strain>
        <tissue evidence="8">Embryo</tissue>
        <tissue evidence="7">Ovary</tissue>
    </source>
</reference>
<reference evidence="5" key="6">
    <citation type="journal article" date="2010" name="EMBO J.">
        <title>HipHop interacts with HOAP and HP1 to protect Drosophila telomeres in a sequence-independent manner.</title>
        <authorList>
            <person name="Gao G."/>
            <person name="Walser J.C."/>
            <person name="Beaucher M.L."/>
            <person name="Morciano P."/>
            <person name="Wesolowska N."/>
            <person name="Chen J."/>
            <person name="Rong Y.S."/>
        </authorList>
    </citation>
    <scope>FUNCTION</scope>
    <scope>IDENTIFICATION IN THE HIPHOP-HOAP COMPLEX</scope>
    <scope>INTERACTION WITH CAV AND SU(VAR)205</scope>
    <scope>IDENTIFICATION BY MASS SPECTROMETRY</scope>
    <scope>SUBCELLULAR LOCATION</scope>
    <scope>DEVELOPMENTAL STAGE</scope>
</reference>
<reference evidence="5" key="7">
    <citation type="journal article" date="2016" name="PLoS Genet.">
        <title>MTV, an ssDNA Protecting Complex Essential for Transposon-Based Telomere Maintenance in Drosophila.</title>
        <authorList>
            <person name="Zhang Y."/>
            <person name="Zhang L."/>
            <person name="Tang X."/>
            <person name="Bhardwaj S.R."/>
            <person name="Ji J."/>
            <person name="Rong Y.S."/>
        </authorList>
    </citation>
    <scope>SUBUNIT</scope>
    <scope>SUBCELLULAR LOCATION</scope>
</reference>
<dbReference type="EMBL" id="AE014296">
    <property type="protein sequence ID" value="AAF49229.1"/>
    <property type="molecule type" value="Genomic_DNA"/>
</dbReference>
<dbReference type="EMBL" id="AE014296">
    <property type="protein sequence ID" value="AAN11669.1"/>
    <property type="molecule type" value="Genomic_DNA"/>
</dbReference>
<dbReference type="EMBL" id="AM294467">
    <property type="protein sequence ID" value="CAL26410.1"/>
    <property type="molecule type" value="Genomic_DNA"/>
</dbReference>
<dbReference type="EMBL" id="AM294468">
    <property type="protein sequence ID" value="CAL26411.1"/>
    <property type="molecule type" value="Genomic_DNA"/>
</dbReference>
<dbReference type="EMBL" id="AM294469">
    <property type="protein sequence ID" value="CAL26412.1"/>
    <property type="molecule type" value="Genomic_DNA"/>
</dbReference>
<dbReference type="EMBL" id="AM294470">
    <property type="protein sequence ID" value="CAL26413.1"/>
    <property type="molecule type" value="Genomic_DNA"/>
</dbReference>
<dbReference type="EMBL" id="AM294471">
    <property type="protein sequence ID" value="CAL26414.1"/>
    <property type="molecule type" value="Genomic_DNA"/>
</dbReference>
<dbReference type="EMBL" id="AM294472">
    <property type="protein sequence ID" value="CAL26415.1"/>
    <property type="molecule type" value="Genomic_DNA"/>
</dbReference>
<dbReference type="EMBL" id="AM294473">
    <property type="protein sequence ID" value="CAL26416.1"/>
    <property type="molecule type" value="Genomic_DNA"/>
</dbReference>
<dbReference type="EMBL" id="AM294474">
    <property type="protein sequence ID" value="CAL26417.1"/>
    <property type="molecule type" value="Genomic_DNA"/>
</dbReference>
<dbReference type="EMBL" id="AM294475">
    <property type="protein sequence ID" value="CAL26418.1"/>
    <property type="molecule type" value="Genomic_DNA"/>
</dbReference>
<dbReference type="EMBL" id="AM294476">
    <property type="protein sequence ID" value="CAL26419.1"/>
    <property type="molecule type" value="Genomic_DNA"/>
</dbReference>
<dbReference type="EMBL" id="AM294477">
    <property type="protein sequence ID" value="CAL26420.1"/>
    <property type="molecule type" value="Genomic_DNA"/>
</dbReference>
<dbReference type="EMBL" id="AM294478">
    <property type="protein sequence ID" value="CAL26421.1"/>
    <property type="molecule type" value="Genomic_DNA"/>
</dbReference>
<dbReference type="EMBL" id="FM245538">
    <property type="protein sequence ID" value="CAR93464.1"/>
    <property type="molecule type" value="Genomic_DNA"/>
</dbReference>
<dbReference type="EMBL" id="FM245539">
    <property type="protein sequence ID" value="CAR93465.1"/>
    <property type="molecule type" value="Genomic_DNA"/>
</dbReference>
<dbReference type="EMBL" id="FM245540">
    <property type="protein sequence ID" value="CAR93466.1"/>
    <property type="molecule type" value="Genomic_DNA"/>
</dbReference>
<dbReference type="EMBL" id="FM245541">
    <property type="protein sequence ID" value="CAR93467.1"/>
    <property type="molecule type" value="Genomic_DNA"/>
</dbReference>
<dbReference type="EMBL" id="FM245542">
    <property type="protein sequence ID" value="CAR93468.1"/>
    <property type="molecule type" value="Genomic_DNA"/>
</dbReference>
<dbReference type="EMBL" id="FM245543">
    <property type="protein sequence ID" value="CAR93469.1"/>
    <property type="molecule type" value="Genomic_DNA"/>
</dbReference>
<dbReference type="EMBL" id="FM245544">
    <property type="protein sequence ID" value="CAR93470.1"/>
    <property type="molecule type" value="Genomic_DNA"/>
</dbReference>
<dbReference type="EMBL" id="FM245545">
    <property type="protein sequence ID" value="CAR93471.1"/>
    <property type="molecule type" value="Genomic_DNA"/>
</dbReference>
<dbReference type="EMBL" id="FM245546">
    <property type="protein sequence ID" value="CAR93472.1"/>
    <property type="molecule type" value="Genomic_DNA"/>
</dbReference>
<dbReference type="EMBL" id="FM245547">
    <property type="protein sequence ID" value="CAR93473.1"/>
    <property type="molecule type" value="Genomic_DNA"/>
</dbReference>
<dbReference type="EMBL" id="FM245548">
    <property type="protein sequence ID" value="CAR93474.1"/>
    <property type="molecule type" value="Genomic_DNA"/>
</dbReference>
<dbReference type="EMBL" id="FM245549">
    <property type="protein sequence ID" value="CAR93475.1"/>
    <property type="molecule type" value="Genomic_DNA"/>
</dbReference>
<dbReference type="EMBL" id="AY060915">
    <property type="protein sequence ID" value="AAL28463.1"/>
    <property type="molecule type" value="mRNA"/>
</dbReference>
<dbReference type="EMBL" id="AY113402">
    <property type="protein sequence ID" value="AAM29407.1"/>
    <property type="molecule type" value="mRNA"/>
</dbReference>
<dbReference type="RefSeq" id="NP_649061.1">
    <property type="nucleotide sequence ID" value="NM_140804.3"/>
</dbReference>
<dbReference type="RefSeq" id="NP_730362.1">
    <property type="nucleotide sequence ID" value="NM_168777.2"/>
</dbReference>
<dbReference type="SMR" id="Q7JWP6"/>
<dbReference type="ComplexPortal" id="CPX-8939">
    <property type="entry name" value="HipHop-HOAP telomere-capping complex"/>
</dbReference>
<dbReference type="FunCoup" id="Q7JWP6">
    <property type="interactions" value="21"/>
</dbReference>
<dbReference type="IntAct" id="Q7JWP6">
    <property type="interactions" value="2"/>
</dbReference>
<dbReference type="MINT" id="Q7JWP6"/>
<dbReference type="STRING" id="7227.FBpp0074824"/>
<dbReference type="PaxDb" id="7227-FBpp0074824"/>
<dbReference type="DNASU" id="40047"/>
<dbReference type="EnsemblMetazoa" id="FBtr0075056">
    <property type="protein sequence ID" value="FBpp0074823"/>
    <property type="gene ID" value="FBgn0036815"/>
</dbReference>
<dbReference type="EnsemblMetazoa" id="FBtr0075057">
    <property type="protein sequence ID" value="FBpp0074824"/>
    <property type="gene ID" value="FBgn0036815"/>
</dbReference>
<dbReference type="GeneID" id="40047"/>
<dbReference type="KEGG" id="dme:Dmel_CG6874"/>
<dbReference type="UCSC" id="CG6874-RA">
    <property type="organism name" value="d. melanogaster"/>
</dbReference>
<dbReference type="AGR" id="FB:FBgn0036815"/>
<dbReference type="CTD" id="40047"/>
<dbReference type="FlyBase" id="FBgn0036815">
    <property type="gene designation" value="HipHop"/>
</dbReference>
<dbReference type="VEuPathDB" id="VectorBase:FBgn0036815"/>
<dbReference type="eggNOG" id="ENOG502T91A">
    <property type="taxonomic scope" value="Eukaryota"/>
</dbReference>
<dbReference type="GeneTree" id="ENSGT00540000073757"/>
<dbReference type="HOGENOM" id="CLU_1373523_0_0_1"/>
<dbReference type="InParanoid" id="Q7JWP6"/>
<dbReference type="OMA" id="TRICALG"/>
<dbReference type="OrthoDB" id="8031641at2759"/>
<dbReference type="BioGRID-ORCS" id="40047">
    <property type="hits" value="1 hit in 1 CRISPR screen"/>
</dbReference>
<dbReference type="GenomeRNAi" id="40047"/>
<dbReference type="Proteomes" id="UP000000803">
    <property type="component" value="Chromosome 3L"/>
</dbReference>
<dbReference type="Bgee" id="FBgn0036815">
    <property type="expression patterns" value="Expressed in adult oenocyte (Drosophila) in adult thorax and 78 other cell types or tissues"/>
</dbReference>
<dbReference type="GO" id="GO:0000781">
    <property type="term" value="C:chromosome, telomeric region"/>
    <property type="evidence" value="ECO:0000314"/>
    <property type="project" value="FlyBase"/>
</dbReference>
<dbReference type="GO" id="GO:0005634">
    <property type="term" value="C:nucleus"/>
    <property type="evidence" value="ECO:0007669"/>
    <property type="project" value="UniProtKB-SubCell"/>
</dbReference>
<dbReference type="GO" id="GO:0034080">
    <property type="term" value="P:CENP-A containing chromatin assembly"/>
    <property type="evidence" value="ECO:0000316"/>
    <property type="project" value="FlyBase"/>
</dbReference>
<dbReference type="GO" id="GO:0031848">
    <property type="term" value="P:protection from non-homologous end joining at telomere"/>
    <property type="evidence" value="ECO:0000314"/>
    <property type="project" value="FlyBase"/>
</dbReference>
<dbReference type="GO" id="GO:0016233">
    <property type="term" value="P:telomere capping"/>
    <property type="evidence" value="ECO:0000315"/>
    <property type="project" value="FlyBase"/>
</dbReference>
<gene>
    <name evidence="4 33" type="primary">HipHop</name>
    <name evidence="33" type="ORF">CG6874</name>
</gene>
<keyword id="KW-0158">Chromosome</keyword>
<keyword id="KW-0539">Nucleus</keyword>
<keyword id="KW-1185">Reference proteome</keyword>
<keyword id="KW-0779">Telomere</keyword>
<organism evidence="34">
    <name type="scientific">Drosophila melanogaster</name>
    <name type="common">Fruit fly</name>
    <dbReference type="NCBI Taxonomy" id="7227"/>
    <lineage>
        <taxon>Eukaryota</taxon>
        <taxon>Metazoa</taxon>
        <taxon>Ecdysozoa</taxon>
        <taxon>Arthropoda</taxon>
        <taxon>Hexapoda</taxon>
        <taxon>Insecta</taxon>
        <taxon>Pterygota</taxon>
        <taxon>Neoptera</taxon>
        <taxon>Endopterygota</taxon>
        <taxon>Diptera</taxon>
        <taxon>Brachycera</taxon>
        <taxon>Muscomorpha</taxon>
        <taxon>Ephydroidea</taxon>
        <taxon>Drosophilidae</taxon>
        <taxon>Drosophila</taxon>
        <taxon>Sophophora</taxon>
    </lineage>
</organism>